<feature type="chain" id="PRO_0000078771" description="RNA-directed RNA polymerase catalytic subunit">
    <location>
        <begin position="1"/>
        <end position="757"/>
    </location>
</feature>
<feature type="domain" description="RdRp catalytic" evidence="2">
    <location>
        <begin position="286"/>
        <end position="483"/>
    </location>
</feature>
<feature type="region of interest" description="Disordered" evidence="3">
    <location>
        <begin position="52"/>
        <end position="78"/>
    </location>
</feature>
<feature type="region of interest" description="Promoter-binding site" evidence="2">
    <location>
        <begin position="249"/>
        <end position="256"/>
    </location>
</feature>
<feature type="short sequence motif" description="Nuclear localization signal" evidence="2">
    <location>
        <begin position="187"/>
        <end position="195"/>
    </location>
</feature>
<feature type="short sequence motif" description="Nuclear localization signal" evidence="2">
    <location>
        <begin position="203"/>
        <end position="216"/>
    </location>
</feature>
<feature type="compositionally biased region" description="Polar residues" evidence="3">
    <location>
        <begin position="55"/>
        <end position="64"/>
    </location>
</feature>
<comment type="function">
    <text evidence="2">RNA-dependent RNA polymerase which is responsible for replication and transcription of virus RNA segments. The transcription of viral mRNAs occurs by a unique mechanism called cap-snatching. 5' methylated caps of cellular mRNAs are cleaved after 10-13 nucleotides by PA. In turn, these short capped RNAs are used as primers by PB1 for transcription of viral mRNAs. During virus replication, PB1 initiates RNA synthesis and copy vRNA into complementary RNA (cRNA) which in turn serves as a template for the production of more vRNAs.</text>
</comment>
<comment type="catalytic activity">
    <reaction evidence="2">
        <text>RNA(n) + a ribonucleoside 5'-triphosphate = RNA(n+1) + diphosphate</text>
        <dbReference type="Rhea" id="RHEA:21248"/>
        <dbReference type="Rhea" id="RHEA-COMP:14527"/>
        <dbReference type="Rhea" id="RHEA-COMP:17342"/>
        <dbReference type="ChEBI" id="CHEBI:33019"/>
        <dbReference type="ChEBI" id="CHEBI:61557"/>
        <dbReference type="ChEBI" id="CHEBI:140395"/>
        <dbReference type="EC" id="2.7.7.48"/>
    </reaction>
</comment>
<comment type="subunit">
    <text evidence="1 2">Influenza RNA polymerase is composed of three subunits: PB1, PB2 and PA. Interacts (via N-terminus) with PA (via C-terminus). Interacts (via C-terminus) with PB2 (via N-terminus); this interaction is essential for transcription initiation. Interacts (via C-terminus) with human PKP2 (via N-terminus); the interaction competitively inhibits the interaction between the RNA polymerase subunits PB1 and PB2 (By similarity).</text>
</comment>
<comment type="subcellular location">
    <subcellularLocation>
        <location evidence="2">Host nucleus</location>
    </subcellularLocation>
    <subcellularLocation>
        <location evidence="2">Host cytoplasm</location>
    </subcellularLocation>
</comment>
<comment type="PTM">
    <text evidence="2">Phosphorylated by host PRKCA.</text>
</comment>
<comment type="similarity">
    <text evidence="2">Belongs to the influenza viruses polymerase PB1 family.</text>
</comment>
<accession>P16512</accession>
<reference key="1">
    <citation type="journal article" date="1989" name="J. Virol.">
        <title>Avian-to-human transmission of the PB1 gene of influenza A viruses in the 1957 and 1968 pandemics.</title>
        <authorList>
            <person name="Kawaoka Y."/>
            <person name="Krauss S."/>
            <person name="Webster R.G."/>
        </authorList>
    </citation>
    <scope>NUCLEOTIDE SEQUENCE [GENOMIC RNA]</scope>
</reference>
<keyword id="KW-1262">Eukaryotic host gene expression shutoff by virus</keyword>
<keyword id="KW-1191">Eukaryotic host transcription shutoff by virus</keyword>
<keyword id="KW-1035">Host cytoplasm</keyword>
<keyword id="KW-1190">Host gene expression shutoff by virus</keyword>
<keyword id="KW-1048">Host nucleus</keyword>
<keyword id="KW-0945">Host-virus interaction</keyword>
<keyword id="KW-1104">Inhibition of host RNA polymerase II by virus</keyword>
<keyword id="KW-0547">Nucleotide-binding</keyword>
<keyword id="KW-0548">Nucleotidyltransferase</keyword>
<keyword id="KW-0597">Phosphoprotein</keyword>
<keyword id="KW-0696">RNA-directed RNA polymerase</keyword>
<keyword id="KW-0808">Transferase</keyword>
<keyword id="KW-0693">Viral RNA replication</keyword>
<keyword id="KW-1195">Viral transcription</keyword>
<evidence type="ECO:0000250" key="1">
    <source>
        <dbReference type="UniProtKB" id="P03431"/>
    </source>
</evidence>
<evidence type="ECO:0000255" key="2">
    <source>
        <dbReference type="HAMAP-Rule" id="MF_04065"/>
    </source>
</evidence>
<evidence type="ECO:0000256" key="3">
    <source>
        <dbReference type="SAM" id="MobiDB-lite"/>
    </source>
</evidence>
<dbReference type="EC" id="2.7.7.48" evidence="2"/>
<dbReference type="EMBL" id="M25931">
    <property type="protein sequence ID" value="AAA43640.1"/>
    <property type="molecule type" value="Genomic_RNA"/>
</dbReference>
<dbReference type="SMR" id="P16512"/>
<dbReference type="GO" id="GO:0030430">
    <property type="term" value="C:host cell cytoplasm"/>
    <property type="evidence" value="ECO:0007669"/>
    <property type="project" value="UniProtKB-SubCell"/>
</dbReference>
<dbReference type="GO" id="GO:0042025">
    <property type="term" value="C:host cell nucleus"/>
    <property type="evidence" value="ECO:0007669"/>
    <property type="project" value="UniProtKB-SubCell"/>
</dbReference>
<dbReference type="GO" id="GO:0000166">
    <property type="term" value="F:nucleotide binding"/>
    <property type="evidence" value="ECO:0007669"/>
    <property type="project" value="UniProtKB-UniRule"/>
</dbReference>
<dbReference type="GO" id="GO:0003723">
    <property type="term" value="F:RNA binding"/>
    <property type="evidence" value="ECO:0007669"/>
    <property type="project" value="InterPro"/>
</dbReference>
<dbReference type="GO" id="GO:0003968">
    <property type="term" value="F:RNA-directed RNA polymerase activity"/>
    <property type="evidence" value="ECO:0007669"/>
    <property type="project" value="UniProtKB-UniRule"/>
</dbReference>
<dbReference type="GO" id="GO:0006351">
    <property type="term" value="P:DNA-templated transcription"/>
    <property type="evidence" value="ECO:0007669"/>
    <property type="project" value="UniProtKB-UniRule"/>
</dbReference>
<dbReference type="GO" id="GO:0039657">
    <property type="term" value="P:symbiont-mediated suppression of host gene expression"/>
    <property type="evidence" value="ECO:0007669"/>
    <property type="project" value="UniProtKB-KW"/>
</dbReference>
<dbReference type="GO" id="GO:0039523">
    <property type="term" value="P:symbiont-mediated suppression of host mRNA transcription via inhibition of RNA polymerase II activity"/>
    <property type="evidence" value="ECO:0007669"/>
    <property type="project" value="UniProtKB-UniRule"/>
</dbReference>
<dbReference type="GO" id="GO:0039694">
    <property type="term" value="P:viral RNA genome replication"/>
    <property type="evidence" value="ECO:0007669"/>
    <property type="project" value="UniProtKB-UniRule"/>
</dbReference>
<dbReference type="GO" id="GO:0019083">
    <property type="term" value="P:viral transcription"/>
    <property type="evidence" value="ECO:0007669"/>
    <property type="project" value="UniProtKB-KW"/>
</dbReference>
<dbReference type="Gene3D" id="6.10.140.720">
    <property type="match status" value="1"/>
</dbReference>
<dbReference type="HAMAP" id="MF_04065">
    <property type="entry name" value="INFV_RDRP"/>
    <property type="match status" value="1"/>
</dbReference>
<dbReference type="InterPro" id="IPR007099">
    <property type="entry name" value="RNA-dir_pol_NSvirus"/>
</dbReference>
<dbReference type="InterPro" id="IPR001407">
    <property type="entry name" value="RNA_pol_PB1_influenza"/>
</dbReference>
<dbReference type="Pfam" id="PF00602">
    <property type="entry name" value="Flu_PB1"/>
    <property type="match status" value="1"/>
</dbReference>
<dbReference type="PIRSF" id="PIRSF000827">
    <property type="entry name" value="RdRPol_OMV"/>
    <property type="match status" value="1"/>
</dbReference>
<dbReference type="PROSITE" id="PS50525">
    <property type="entry name" value="RDRP_SSRNA_NEG_SEG"/>
    <property type="match status" value="1"/>
</dbReference>
<organism>
    <name type="scientific">Influenza A virus (strain A/Swine/Tennessee/26/1977 H1N1)</name>
    <dbReference type="NCBI Taxonomy" id="384479"/>
    <lineage>
        <taxon>Viruses</taxon>
        <taxon>Riboviria</taxon>
        <taxon>Orthornavirae</taxon>
        <taxon>Negarnaviricota</taxon>
        <taxon>Polyploviricotina</taxon>
        <taxon>Insthoviricetes</taxon>
        <taxon>Articulavirales</taxon>
        <taxon>Orthomyxoviridae</taxon>
        <taxon>Alphainfluenzavirus</taxon>
        <taxon>Alphainfluenzavirus influenzae</taxon>
        <taxon>Influenza A virus</taxon>
    </lineage>
</organism>
<organismHost>
    <name type="scientific">Aves</name>
    <dbReference type="NCBI Taxonomy" id="8782"/>
</organismHost>
<organismHost>
    <name type="scientific">Homo sapiens</name>
    <name type="common">Human</name>
    <dbReference type="NCBI Taxonomy" id="9606"/>
</organismHost>
<organismHost>
    <name type="scientific">Sus scrofa</name>
    <name type="common">Pig</name>
    <dbReference type="NCBI Taxonomy" id="9823"/>
</organismHost>
<gene>
    <name evidence="2" type="primary">PB1</name>
</gene>
<name>RDRP_I77AD</name>
<sequence>MDVNPTLLFLKVPAQNAISTTFPYTGDPPYSHGTGTGYTMDTVNRTHQYSERGKWTTNTETGAPQLNPIDGPLPEDNEPTGYAQTDCVLEAMAFLEKSHPGIFENSCLETMEVVQQTRVDKLTQGRQTFDWTLNRNQPAATALANTIEVFRLNGLTASESGRLIDFLKDVMESMDKEEMEIVTHFQRKRRVRDNMTKKMVTQRTIGKKKQKLNKRSYIIRALTLNTMTKDAERGKLKRRAIATPGMQIRGFVYFVETLARSICEKLEQSGLPVGGNEKKAKLANVVRKMMTNSQDTELSFTITGDNTKWNENQNPRMFLAMITYITRNQPEWFRNVLSIAPIMFSNKMARLGKGYMFESKNMKLRTQIPAEMLSGIDLRYFNDSTRKKIEKIRPLLIDGAASLSPGMMMGMFNMLSTVLGVSILNLGQKEYTKTAYWWDGLQSSDDFALIVNALNHEGIQAGVDRFYRTCKLLGINMSKKKSYINRTGTFEFTSFFYRYGFVANFSMELPSFGVSGINESADMSIGVTVIKNNMINNDLGPATAQMALQLFIKDYRYTYRCHRGDTQIQTRRSFEIKKLWDQTHSKAGLLVSDGGPNLYNIRNLHIPEVCLKWELMDKDYQGRLCNPLNPFVSHKEIESVNNAVVMPSHGPAKTMEYDAVATTHSWVPKRNRSILNTSQRGILEDEQMYQKCCNLFEKFFPSSSYRRPVGISSMVEAMVSRARIDARIDFESGRIKKEDFAEIMKICSTIEDLRRQK</sequence>
<proteinExistence type="inferred from homology"/>
<protein>
    <recommendedName>
        <fullName evidence="2">RNA-directed RNA polymerase catalytic subunit</fullName>
        <ecNumber evidence="2">2.7.7.48</ecNumber>
    </recommendedName>
    <alternativeName>
        <fullName evidence="2">Polymerase basic protein 1</fullName>
        <shortName evidence="2">PB1</shortName>
    </alternativeName>
    <alternativeName>
        <fullName evidence="2">RNA-directed RNA polymerase subunit P1</fullName>
    </alternativeName>
</protein>